<reference key="1">
    <citation type="journal article" date="2005" name="Science">
        <title>The transcriptional landscape of the mammalian genome.</title>
        <authorList>
            <person name="Carninci P."/>
            <person name="Kasukawa T."/>
            <person name="Katayama S."/>
            <person name="Gough J."/>
            <person name="Frith M.C."/>
            <person name="Maeda N."/>
            <person name="Oyama R."/>
            <person name="Ravasi T."/>
            <person name="Lenhard B."/>
            <person name="Wells C."/>
            <person name="Kodzius R."/>
            <person name="Shimokawa K."/>
            <person name="Bajic V.B."/>
            <person name="Brenner S.E."/>
            <person name="Batalov S."/>
            <person name="Forrest A.R."/>
            <person name="Zavolan M."/>
            <person name="Davis M.J."/>
            <person name="Wilming L.G."/>
            <person name="Aidinis V."/>
            <person name="Allen J.E."/>
            <person name="Ambesi-Impiombato A."/>
            <person name="Apweiler R."/>
            <person name="Aturaliya R.N."/>
            <person name="Bailey T.L."/>
            <person name="Bansal M."/>
            <person name="Baxter L."/>
            <person name="Beisel K.W."/>
            <person name="Bersano T."/>
            <person name="Bono H."/>
            <person name="Chalk A.M."/>
            <person name="Chiu K.P."/>
            <person name="Choudhary V."/>
            <person name="Christoffels A."/>
            <person name="Clutterbuck D.R."/>
            <person name="Crowe M.L."/>
            <person name="Dalla E."/>
            <person name="Dalrymple B.P."/>
            <person name="de Bono B."/>
            <person name="Della Gatta G."/>
            <person name="di Bernardo D."/>
            <person name="Down T."/>
            <person name="Engstrom P."/>
            <person name="Fagiolini M."/>
            <person name="Faulkner G."/>
            <person name="Fletcher C.F."/>
            <person name="Fukushima T."/>
            <person name="Furuno M."/>
            <person name="Futaki S."/>
            <person name="Gariboldi M."/>
            <person name="Georgii-Hemming P."/>
            <person name="Gingeras T.R."/>
            <person name="Gojobori T."/>
            <person name="Green R.E."/>
            <person name="Gustincich S."/>
            <person name="Harbers M."/>
            <person name="Hayashi Y."/>
            <person name="Hensch T.K."/>
            <person name="Hirokawa N."/>
            <person name="Hill D."/>
            <person name="Huminiecki L."/>
            <person name="Iacono M."/>
            <person name="Ikeo K."/>
            <person name="Iwama A."/>
            <person name="Ishikawa T."/>
            <person name="Jakt M."/>
            <person name="Kanapin A."/>
            <person name="Katoh M."/>
            <person name="Kawasawa Y."/>
            <person name="Kelso J."/>
            <person name="Kitamura H."/>
            <person name="Kitano H."/>
            <person name="Kollias G."/>
            <person name="Krishnan S.P."/>
            <person name="Kruger A."/>
            <person name="Kummerfeld S.K."/>
            <person name="Kurochkin I.V."/>
            <person name="Lareau L.F."/>
            <person name="Lazarevic D."/>
            <person name="Lipovich L."/>
            <person name="Liu J."/>
            <person name="Liuni S."/>
            <person name="McWilliam S."/>
            <person name="Madan Babu M."/>
            <person name="Madera M."/>
            <person name="Marchionni L."/>
            <person name="Matsuda H."/>
            <person name="Matsuzawa S."/>
            <person name="Miki H."/>
            <person name="Mignone F."/>
            <person name="Miyake S."/>
            <person name="Morris K."/>
            <person name="Mottagui-Tabar S."/>
            <person name="Mulder N."/>
            <person name="Nakano N."/>
            <person name="Nakauchi H."/>
            <person name="Ng P."/>
            <person name="Nilsson R."/>
            <person name="Nishiguchi S."/>
            <person name="Nishikawa S."/>
            <person name="Nori F."/>
            <person name="Ohara O."/>
            <person name="Okazaki Y."/>
            <person name="Orlando V."/>
            <person name="Pang K.C."/>
            <person name="Pavan W.J."/>
            <person name="Pavesi G."/>
            <person name="Pesole G."/>
            <person name="Petrovsky N."/>
            <person name="Piazza S."/>
            <person name="Reed J."/>
            <person name="Reid J.F."/>
            <person name="Ring B.Z."/>
            <person name="Ringwald M."/>
            <person name="Rost B."/>
            <person name="Ruan Y."/>
            <person name="Salzberg S.L."/>
            <person name="Sandelin A."/>
            <person name="Schneider C."/>
            <person name="Schoenbach C."/>
            <person name="Sekiguchi K."/>
            <person name="Semple C.A."/>
            <person name="Seno S."/>
            <person name="Sessa L."/>
            <person name="Sheng Y."/>
            <person name="Shibata Y."/>
            <person name="Shimada H."/>
            <person name="Shimada K."/>
            <person name="Silva D."/>
            <person name="Sinclair B."/>
            <person name="Sperling S."/>
            <person name="Stupka E."/>
            <person name="Sugiura K."/>
            <person name="Sultana R."/>
            <person name="Takenaka Y."/>
            <person name="Taki K."/>
            <person name="Tammoja K."/>
            <person name="Tan S.L."/>
            <person name="Tang S."/>
            <person name="Taylor M.S."/>
            <person name="Tegner J."/>
            <person name="Teichmann S.A."/>
            <person name="Ueda H.R."/>
            <person name="van Nimwegen E."/>
            <person name="Verardo R."/>
            <person name="Wei C.L."/>
            <person name="Yagi K."/>
            <person name="Yamanishi H."/>
            <person name="Zabarovsky E."/>
            <person name="Zhu S."/>
            <person name="Zimmer A."/>
            <person name="Hide W."/>
            <person name="Bult C."/>
            <person name="Grimmond S.M."/>
            <person name="Teasdale R.D."/>
            <person name="Liu E.T."/>
            <person name="Brusic V."/>
            <person name="Quackenbush J."/>
            <person name="Wahlestedt C."/>
            <person name="Mattick J.S."/>
            <person name="Hume D.A."/>
            <person name="Kai C."/>
            <person name="Sasaki D."/>
            <person name="Tomaru Y."/>
            <person name="Fukuda S."/>
            <person name="Kanamori-Katayama M."/>
            <person name="Suzuki M."/>
            <person name="Aoki J."/>
            <person name="Arakawa T."/>
            <person name="Iida J."/>
            <person name="Imamura K."/>
            <person name="Itoh M."/>
            <person name="Kato T."/>
            <person name="Kawaji H."/>
            <person name="Kawagashira N."/>
            <person name="Kawashima T."/>
            <person name="Kojima M."/>
            <person name="Kondo S."/>
            <person name="Konno H."/>
            <person name="Nakano K."/>
            <person name="Ninomiya N."/>
            <person name="Nishio T."/>
            <person name="Okada M."/>
            <person name="Plessy C."/>
            <person name="Shibata K."/>
            <person name="Shiraki T."/>
            <person name="Suzuki S."/>
            <person name="Tagami M."/>
            <person name="Waki K."/>
            <person name="Watahiki A."/>
            <person name="Okamura-Oho Y."/>
            <person name="Suzuki H."/>
            <person name="Kawai J."/>
            <person name="Hayashizaki Y."/>
        </authorList>
    </citation>
    <scope>NUCLEOTIDE SEQUENCE [LARGE SCALE MRNA]</scope>
    <source>
        <strain>C57BL/6J</strain>
        <tissue>Embryo</tissue>
        <tissue>Urinary bladder</tissue>
    </source>
</reference>
<reference key="2">
    <citation type="journal article" date="2004" name="Genome Res.">
        <title>The status, quality, and expansion of the NIH full-length cDNA project: the Mammalian Gene Collection (MGC).</title>
        <authorList>
            <consortium name="The MGC Project Team"/>
        </authorList>
    </citation>
    <scope>NUCLEOTIDE SEQUENCE [LARGE SCALE MRNA]</scope>
    <source>
        <strain>FVB/N-3</strain>
        <tissue>Mammary tumor</tissue>
    </source>
</reference>
<reference key="3">
    <citation type="journal article" date="2007" name="Proc. Natl. Acad. Sci. U.S.A.">
        <title>Large-scale phosphorylation analysis of mouse liver.</title>
        <authorList>
            <person name="Villen J."/>
            <person name="Beausoleil S.A."/>
            <person name="Gerber S.A."/>
            <person name="Gygi S.P."/>
        </authorList>
    </citation>
    <scope>IDENTIFICATION BY MASS SPECTROMETRY [LARGE SCALE ANALYSIS]</scope>
    <source>
        <tissue>Liver</tissue>
    </source>
</reference>
<reference key="4">
    <citation type="journal article" date="2009" name="Immunity">
        <title>The phagosomal proteome in interferon-gamma-activated macrophages.</title>
        <authorList>
            <person name="Trost M."/>
            <person name="English L."/>
            <person name="Lemieux S."/>
            <person name="Courcelles M."/>
            <person name="Desjardins M."/>
            <person name="Thibault P."/>
        </authorList>
    </citation>
    <scope>IDENTIFICATION BY MASS SPECTROMETRY [LARGE SCALE ANALYSIS]</scope>
</reference>
<reference key="5">
    <citation type="journal article" date="2010" name="Cell">
        <title>A tissue-specific atlas of mouse protein phosphorylation and expression.</title>
        <authorList>
            <person name="Huttlin E.L."/>
            <person name="Jedrychowski M.P."/>
            <person name="Elias J.E."/>
            <person name="Goswami T."/>
            <person name="Rad R."/>
            <person name="Beausoleil S.A."/>
            <person name="Villen J."/>
            <person name="Haas W."/>
            <person name="Sowa M.E."/>
            <person name="Gygi S.P."/>
        </authorList>
    </citation>
    <scope>PHOSPHORYLATION [LARGE SCALE ANALYSIS] AT SER-82</scope>
    <scope>IDENTIFICATION BY MASS SPECTROMETRY [LARGE SCALE ANALYSIS]</scope>
    <source>
        <tissue>Brown adipose tissue</tissue>
        <tissue>Heart</tissue>
        <tissue>Kidney</tissue>
        <tissue>Liver</tissue>
        <tissue>Pancreas</tissue>
        <tissue>Spleen</tissue>
    </source>
</reference>
<reference key="6">
    <citation type="journal article" date="2014" name="Mol. Cell. Proteomics">
        <title>Immunoaffinity enrichment and mass spectrometry analysis of protein methylation.</title>
        <authorList>
            <person name="Guo A."/>
            <person name="Gu H."/>
            <person name="Zhou J."/>
            <person name="Mulhern D."/>
            <person name="Wang Y."/>
            <person name="Lee K.A."/>
            <person name="Yang V."/>
            <person name="Aguiar M."/>
            <person name="Kornhauser J."/>
            <person name="Jia X."/>
            <person name="Ren J."/>
            <person name="Beausoleil S.A."/>
            <person name="Silva J.C."/>
            <person name="Vemulapalli V."/>
            <person name="Bedford M.T."/>
            <person name="Comb M.J."/>
        </authorList>
    </citation>
    <scope>METHYLATION [LARGE SCALE ANALYSIS] AT ARG-35 AND ARG-65</scope>
    <scope>IDENTIFICATION BY MASS SPECTROMETRY [LARGE SCALE ANALYSIS]</scope>
    <source>
        <tissue>Brain</tissue>
        <tissue>Embryo</tissue>
    </source>
</reference>
<evidence type="ECO:0000250" key="1">
    <source>
        <dbReference type="UniProtKB" id="Q9BUT9"/>
    </source>
</evidence>
<evidence type="ECO:0000256" key="2">
    <source>
        <dbReference type="SAM" id="MobiDB-lite"/>
    </source>
</evidence>
<evidence type="ECO:0000305" key="3"/>
<evidence type="ECO:0007744" key="4">
    <source>
    </source>
</evidence>
<evidence type="ECO:0007744" key="5">
    <source>
    </source>
</evidence>
<keyword id="KW-0007">Acetylation</keyword>
<keyword id="KW-0963">Cytoplasm</keyword>
<keyword id="KW-0488">Methylation</keyword>
<keyword id="KW-0539">Nucleus</keyword>
<keyword id="KW-0597">Phosphoprotein</keyword>
<keyword id="KW-1185">Reference proteome</keyword>
<accession>Q9CQB2</accession>
<organism>
    <name type="scientific">Mus musculus</name>
    <name type="common">Mouse</name>
    <dbReference type="NCBI Taxonomy" id="10090"/>
    <lineage>
        <taxon>Eukaryota</taxon>
        <taxon>Metazoa</taxon>
        <taxon>Chordata</taxon>
        <taxon>Craniata</taxon>
        <taxon>Vertebrata</taxon>
        <taxon>Euteleostomi</taxon>
        <taxon>Mammalia</taxon>
        <taxon>Eutheria</taxon>
        <taxon>Euarchontoglires</taxon>
        <taxon>Glires</taxon>
        <taxon>Rodentia</taxon>
        <taxon>Myomorpha</taxon>
        <taxon>Muroidea</taxon>
        <taxon>Muridae</taxon>
        <taxon>Murinae</taxon>
        <taxon>Mus</taxon>
        <taxon>Mus</taxon>
    </lineage>
</organism>
<gene>
    <name type="primary">Mcrip2</name>
    <name type="synonym">Fam195a</name>
</gene>
<sequence>MYTITKGPSKLVAQRRTGPTQQQVESRLGELLKCRQPVPPTALPAHLQPSAQTQGPWPLASSGPRLVFNRVNGRRPLTTSPSLEGTQETYTVAHEENVRFVSEAWQQVERQLDGGPADESGPRPVQYVESTPDPRLQNFVPIDLDEWWAQQFLAKITNCS</sequence>
<proteinExistence type="evidence at protein level"/>
<dbReference type="EMBL" id="AK003564">
    <property type="protein sequence ID" value="BAB22860.1"/>
    <property type="molecule type" value="mRNA"/>
</dbReference>
<dbReference type="EMBL" id="AK020614">
    <property type="protein sequence ID" value="BAB32148.1"/>
    <property type="molecule type" value="mRNA"/>
</dbReference>
<dbReference type="EMBL" id="BC024332">
    <property type="protein sequence ID" value="AAH24332.1"/>
    <property type="molecule type" value="mRNA"/>
</dbReference>
<dbReference type="CCDS" id="CCDS28535.1"/>
<dbReference type="RefSeq" id="NP_080909.1">
    <property type="nucleotide sequence ID" value="NM_026633.3"/>
</dbReference>
<dbReference type="FunCoup" id="Q9CQB2">
    <property type="interactions" value="1036"/>
</dbReference>
<dbReference type="IntAct" id="Q9CQB2">
    <property type="interactions" value="1"/>
</dbReference>
<dbReference type="MINT" id="Q9CQB2"/>
<dbReference type="STRING" id="10090.ENSMUSP00000026828"/>
<dbReference type="iPTMnet" id="Q9CQB2"/>
<dbReference type="PhosphoSitePlus" id="Q9CQB2"/>
<dbReference type="jPOST" id="Q9CQB2"/>
<dbReference type="PaxDb" id="10090-ENSMUSP00000026828"/>
<dbReference type="PeptideAtlas" id="Q9CQB2"/>
<dbReference type="ProteomicsDB" id="292201"/>
<dbReference type="Pumba" id="Q9CQB2"/>
<dbReference type="Antibodypedia" id="42373">
    <property type="antibodies" value="23 antibodies from 14 providers"/>
</dbReference>
<dbReference type="DNASU" id="68241"/>
<dbReference type="Ensembl" id="ENSMUST00000026828.7">
    <property type="protein sequence ID" value="ENSMUSP00000026828.6"/>
    <property type="gene ID" value="ENSMUSG00000025732.7"/>
</dbReference>
<dbReference type="GeneID" id="68241"/>
<dbReference type="KEGG" id="mmu:68241"/>
<dbReference type="UCSC" id="uc008bck.1">
    <property type="organism name" value="mouse"/>
</dbReference>
<dbReference type="AGR" id="MGI:1915491"/>
<dbReference type="CTD" id="84331"/>
<dbReference type="MGI" id="MGI:1915491">
    <property type="gene designation" value="Mcrip2"/>
</dbReference>
<dbReference type="VEuPathDB" id="HostDB:ENSMUSG00000025732"/>
<dbReference type="eggNOG" id="ENOG502RZDA">
    <property type="taxonomic scope" value="Eukaryota"/>
</dbReference>
<dbReference type="GeneTree" id="ENSGT00940000160332"/>
<dbReference type="HOGENOM" id="CLU_121013_0_0_1"/>
<dbReference type="InParanoid" id="Q9CQB2"/>
<dbReference type="OMA" id="YESWNQV"/>
<dbReference type="OrthoDB" id="9983138at2759"/>
<dbReference type="PhylomeDB" id="Q9CQB2"/>
<dbReference type="TreeFam" id="TF326620"/>
<dbReference type="BioGRID-ORCS" id="68241">
    <property type="hits" value="3 hits in 77 CRISPR screens"/>
</dbReference>
<dbReference type="ChiTaRS" id="Fam195a">
    <property type="organism name" value="mouse"/>
</dbReference>
<dbReference type="PRO" id="PR:Q9CQB2"/>
<dbReference type="Proteomes" id="UP000000589">
    <property type="component" value="Chromosome 17"/>
</dbReference>
<dbReference type="RNAct" id="Q9CQB2">
    <property type="molecule type" value="protein"/>
</dbReference>
<dbReference type="Bgee" id="ENSMUSG00000025732">
    <property type="expression patterns" value="Expressed in interventricular septum and 229 other cell types or tissues"/>
</dbReference>
<dbReference type="ExpressionAtlas" id="Q9CQB2">
    <property type="expression patterns" value="baseline and differential"/>
</dbReference>
<dbReference type="GO" id="GO:0005737">
    <property type="term" value="C:cytoplasm"/>
    <property type="evidence" value="ECO:0000250"/>
    <property type="project" value="UniProtKB"/>
</dbReference>
<dbReference type="GO" id="GO:0010494">
    <property type="term" value="C:cytoplasmic stress granule"/>
    <property type="evidence" value="ECO:0000314"/>
    <property type="project" value="MGI"/>
</dbReference>
<dbReference type="GO" id="GO:0005829">
    <property type="term" value="C:cytosol"/>
    <property type="evidence" value="ECO:0000314"/>
    <property type="project" value="MGI"/>
</dbReference>
<dbReference type="GO" id="GO:0005634">
    <property type="term" value="C:nucleus"/>
    <property type="evidence" value="ECO:0000314"/>
    <property type="project" value="MGI"/>
</dbReference>
<dbReference type="GO" id="GO:0044877">
    <property type="term" value="F:protein-containing complex binding"/>
    <property type="evidence" value="ECO:0000314"/>
    <property type="project" value="MGI"/>
</dbReference>
<dbReference type="GO" id="GO:0003723">
    <property type="term" value="F:RNA binding"/>
    <property type="evidence" value="ECO:0000314"/>
    <property type="project" value="MGI"/>
</dbReference>
<dbReference type="GO" id="GO:0009081">
    <property type="term" value="P:branched-chain amino acid metabolic process"/>
    <property type="evidence" value="ECO:0000315"/>
    <property type="project" value="MGI"/>
</dbReference>
<dbReference type="GO" id="GO:0106106">
    <property type="term" value="P:cold-induced thermogenesis"/>
    <property type="evidence" value="ECO:0000315"/>
    <property type="project" value="MGI"/>
</dbReference>
<dbReference type="GO" id="GO:0006631">
    <property type="term" value="P:fatty acid metabolic process"/>
    <property type="evidence" value="ECO:0000315"/>
    <property type="project" value="MGI"/>
</dbReference>
<dbReference type="GO" id="GO:0010467">
    <property type="term" value="P:gene expression"/>
    <property type="evidence" value="ECO:0000315"/>
    <property type="project" value="MGI"/>
</dbReference>
<dbReference type="GO" id="GO:0009409">
    <property type="term" value="P:response to cold"/>
    <property type="evidence" value="ECO:0000315"/>
    <property type="project" value="MGI"/>
</dbReference>
<dbReference type="InterPro" id="IPR029428">
    <property type="entry name" value="MCRIP"/>
</dbReference>
<dbReference type="Pfam" id="PF14799">
    <property type="entry name" value="FAM195"/>
    <property type="match status" value="1"/>
</dbReference>
<protein>
    <recommendedName>
        <fullName>MAPK regulated corepressor interacting protein 2</fullName>
    </recommendedName>
    <alternativeName>
        <fullName>Protein FAM195A</fullName>
    </alternativeName>
</protein>
<comment type="subunit">
    <text evidence="1">Interacts with DDX6. Interacts with MCRIP1.</text>
</comment>
<comment type="subcellular location">
    <subcellularLocation>
        <location evidence="1">Cytoplasm</location>
        <location evidence="1">Stress granule</location>
    </subcellularLocation>
    <subcellularLocation>
        <location evidence="1">Nucleus</location>
    </subcellularLocation>
    <text evidence="1">Upon cellular stress, relocalizes to stress granules.</text>
</comment>
<comment type="similarity">
    <text evidence="3">Belongs to the MCRIP family.</text>
</comment>
<feature type="chain" id="PRO_0000274329" description="MAPK regulated corepressor interacting protein 2">
    <location>
        <begin position="1"/>
        <end position="160"/>
    </location>
</feature>
<feature type="region of interest" description="Disordered" evidence="2">
    <location>
        <begin position="1"/>
        <end position="22"/>
    </location>
</feature>
<feature type="region of interest" description="Disordered" evidence="2">
    <location>
        <begin position="43"/>
        <end position="64"/>
    </location>
</feature>
<feature type="modified residue" description="N-acetylmethionine" evidence="1">
    <location>
        <position position="1"/>
    </location>
</feature>
<feature type="modified residue" description="Omega-N-methylarginine" evidence="5">
    <location>
        <position position="35"/>
    </location>
</feature>
<feature type="modified residue" description="Phosphoserine" evidence="1">
    <location>
        <position position="61"/>
    </location>
</feature>
<feature type="modified residue" description="Omega-N-methylarginine" evidence="5">
    <location>
        <position position="65"/>
    </location>
</feature>
<feature type="modified residue" description="Phosphoserine" evidence="4">
    <location>
        <position position="82"/>
    </location>
</feature>
<name>MCRI2_MOUSE</name>